<evidence type="ECO:0000255" key="1">
    <source>
        <dbReference type="HAMAP-Rule" id="MF_00321"/>
    </source>
</evidence>
<dbReference type="EMBL" id="AP006841">
    <property type="protein sequence ID" value="BAD48795.1"/>
    <property type="molecule type" value="Genomic_DNA"/>
</dbReference>
<dbReference type="RefSeq" id="YP_099329.1">
    <property type="nucleotide sequence ID" value="NC_006347.1"/>
</dbReference>
<dbReference type="SMR" id="Q64UN4"/>
<dbReference type="STRING" id="295405.BF2048"/>
<dbReference type="KEGG" id="bfr:BF2048"/>
<dbReference type="PATRIC" id="fig|295405.11.peg.1996"/>
<dbReference type="HOGENOM" id="CLU_033732_3_1_10"/>
<dbReference type="OrthoDB" id="9804921at2"/>
<dbReference type="Proteomes" id="UP000002197">
    <property type="component" value="Chromosome"/>
</dbReference>
<dbReference type="GO" id="GO:0005525">
    <property type="term" value="F:GTP binding"/>
    <property type="evidence" value="ECO:0007669"/>
    <property type="project" value="UniProtKB-UniRule"/>
</dbReference>
<dbReference type="GO" id="GO:0046872">
    <property type="term" value="F:metal ion binding"/>
    <property type="evidence" value="ECO:0007669"/>
    <property type="project" value="UniProtKB-KW"/>
</dbReference>
<dbReference type="GO" id="GO:0000917">
    <property type="term" value="P:division septum assembly"/>
    <property type="evidence" value="ECO:0007669"/>
    <property type="project" value="UniProtKB-KW"/>
</dbReference>
<dbReference type="CDD" id="cd01876">
    <property type="entry name" value="YihA_EngB"/>
    <property type="match status" value="1"/>
</dbReference>
<dbReference type="FunFam" id="3.40.50.300:FF:000098">
    <property type="entry name" value="Probable GTP-binding protein EngB"/>
    <property type="match status" value="1"/>
</dbReference>
<dbReference type="Gene3D" id="3.40.50.300">
    <property type="entry name" value="P-loop containing nucleotide triphosphate hydrolases"/>
    <property type="match status" value="1"/>
</dbReference>
<dbReference type="HAMAP" id="MF_00321">
    <property type="entry name" value="GTPase_EngB"/>
    <property type="match status" value="1"/>
</dbReference>
<dbReference type="InterPro" id="IPR030393">
    <property type="entry name" value="G_ENGB_dom"/>
</dbReference>
<dbReference type="InterPro" id="IPR006073">
    <property type="entry name" value="GTP-bd"/>
</dbReference>
<dbReference type="InterPro" id="IPR019987">
    <property type="entry name" value="GTP-bd_ribosome_bio_YsxC"/>
</dbReference>
<dbReference type="InterPro" id="IPR027417">
    <property type="entry name" value="P-loop_NTPase"/>
</dbReference>
<dbReference type="NCBIfam" id="TIGR03598">
    <property type="entry name" value="GTPase_YsxC"/>
    <property type="match status" value="1"/>
</dbReference>
<dbReference type="PANTHER" id="PTHR11649:SF13">
    <property type="entry name" value="ENGB-TYPE G DOMAIN-CONTAINING PROTEIN"/>
    <property type="match status" value="1"/>
</dbReference>
<dbReference type="PANTHER" id="PTHR11649">
    <property type="entry name" value="MSS1/TRME-RELATED GTP-BINDING PROTEIN"/>
    <property type="match status" value="1"/>
</dbReference>
<dbReference type="Pfam" id="PF01926">
    <property type="entry name" value="MMR_HSR1"/>
    <property type="match status" value="1"/>
</dbReference>
<dbReference type="SUPFAM" id="SSF52540">
    <property type="entry name" value="P-loop containing nucleoside triphosphate hydrolases"/>
    <property type="match status" value="1"/>
</dbReference>
<dbReference type="PROSITE" id="PS51706">
    <property type="entry name" value="G_ENGB"/>
    <property type="match status" value="1"/>
</dbReference>
<proteinExistence type="inferred from homology"/>
<organism>
    <name type="scientific">Bacteroides fragilis (strain YCH46)</name>
    <dbReference type="NCBI Taxonomy" id="295405"/>
    <lineage>
        <taxon>Bacteria</taxon>
        <taxon>Pseudomonadati</taxon>
        <taxon>Bacteroidota</taxon>
        <taxon>Bacteroidia</taxon>
        <taxon>Bacteroidales</taxon>
        <taxon>Bacteroidaceae</taxon>
        <taxon>Bacteroides</taxon>
    </lineage>
</organism>
<name>ENGB_BACFR</name>
<protein>
    <recommendedName>
        <fullName evidence="1">Probable GTP-binding protein EngB</fullName>
    </recommendedName>
</protein>
<reference key="1">
    <citation type="journal article" date="2004" name="Proc. Natl. Acad. Sci. U.S.A.">
        <title>Genomic analysis of Bacteroides fragilis reveals extensive DNA inversions regulating cell surface adaptation.</title>
        <authorList>
            <person name="Kuwahara T."/>
            <person name="Yamashita A."/>
            <person name="Hirakawa H."/>
            <person name="Nakayama H."/>
            <person name="Toh H."/>
            <person name="Okada N."/>
            <person name="Kuhara S."/>
            <person name="Hattori M."/>
            <person name="Hayashi T."/>
            <person name="Ohnishi Y."/>
        </authorList>
    </citation>
    <scope>NUCLEOTIDE SEQUENCE [LARGE SCALE GENOMIC DNA]</scope>
    <source>
        <strain>YCH46</strain>
    </source>
</reference>
<accession>Q64UN4</accession>
<comment type="function">
    <text evidence="1">Necessary for normal cell division and for the maintenance of normal septation.</text>
</comment>
<comment type="cofactor">
    <cofactor evidence="1">
        <name>Mg(2+)</name>
        <dbReference type="ChEBI" id="CHEBI:18420"/>
    </cofactor>
</comment>
<comment type="similarity">
    <text evidence="1">Belongs to the TRAFAC class TrmE-Era-EngA-EngB-Septin-like GTPase superfamily. EngB GTPase family.</text>
</comment>
<gene>
    <name evidence="1" type="primary">engB</name>
    <name type="ordered locus">BF2048</name>
</gene>
<feature type="chain" id="PRO_0000266818" description="Probable GTP-binding protein EngB">
    <location>
        <begin position="1"/>
        <end position="201"/>
    </location>
</feature>
<feature type="domain" description="EngB-type G" evidence="1">
    <location>
        <begin position="22"/>
        <end position="197"/>
    </location>
</feature>
<feature type="binding site" evidence="1">
    <location>
        <begin position="30"/>
        <end position="37"/>
    </location>
    <ligand>
        <name>GTP</name>
        <dbReference type="ChEBI" id="CHEBI:37565"/>
    </ligand>
</feature>
<feature type="binding site" evidence="1">
    <location>
        <position position="37"/>
    </location>
    <ligand>
        <name>Mg(2+)</name>
        <dbReference type="ChEBI" id="CHEBI:18420"/>
    </ligand>
</feature>
<feature type="binding site" evidence="1">
    <location>
        <begin position="57"/>
        <end position="61"/>
    </location>
    <ligand>
        <name>GTP</name>
        <dbReference type="ChEBI" id="CHEBI:37565"/>
    </ligand>
</feature>
<feature type="binding site" evidence="1">
    <location>
        <position position="59"/>
    </location>
    <ligand>
        <name>Mg(2+)</name>
        <dbReference type="ChEBI" id="CHEBI:18420"/>
    </ligand>
</feature>
<feature type="binding site" evidence="1">
    <location>
        <begin position="75"/>
        <end position="78"/>
    </location>
    <ligand>
        <name>GTP</name>
        <dbReference type="ChEBI" id="CHEBI:37565"/>
    </ligand>
</feature>
<feature type="binding site" evidence="1">
    <location>
        <begin position="142"/>
        <end position="145"/>
    </location>
    <ligand>
        <name>GTP</name>
        <dbReference type="ChEBI" id="CHEBI:37565"/>
    </ligand>
</feature>
<feature type="binding site" evidence="1">
    <location>
        <begin position="175"/>
        <end position="178"/>
    </location>
    <ligand>
        <name>GTP</name>
        <dbReference type="ChEBI" id="CHEBI:37565"/>
    </ligand>
</feature>
<keyword id="KW-0131">Cell cycle</keyword>
<keyword id="KW-0132">Cell division</keyword>
<keyword id="KW-0342">GTP-binding</keyword>
<keyword id="KW-0460">Magnesium</keyword>
<keyword id="KW-0479">Metal-binding</keyword>
<keyword id="KW-0547">Nucleotide-binding</keyword>
<keyword id="KW-0717">Septation</keyword>
<sequence>MEITNAEFVISNTDVKKCPAGTFPEYAFIGRSNVGKSSLINMLTGRKGLAMTSATPGKTMLINHFLINNSWYLVDLPGYGYARRGQKGQEQIRTIIEDYILEREQMTNLFVLIDSRLEPQKIDLEFMEWLGENGIPFAIIFTKADKLKGGRLKINISAYLRELRKQWEELPPYFITSSEERLGRTEVLNYIESINKELNSK</sequence>